<dbReference type="EMBL" id="AK295488">
    <property type="protein sequence ID" value="BAG58410.1"/>
    <property type="molecule type" value="mRNA"/>
</dbReference>
<dbReference type="EMBL" id="AC003038">
    <property type="protein sequence ID" value="AAD03162.1"/>
    <property type="status" value="ALT_SEQ"/>
    <property type="molecule type" value="Genomic_DNA"/>
</dbReference>
<dbReference type="EMBL" id="AC004447">
    <property type="status" value="NOT_ANNOTATED_CDS"/>
    <property type="molecule type" value="Genomic_DNA"/>
</dbReference>
<dbReference type="EMBL" id="BC003700">
    <property type="protein sequence ID" value="AAH03700.1"/>
    <property type="molecule type" value="mRNA"/>
</dbReference>
<dbReference type="EMBL" id="BC067125">
    <property type="protein sequence ID" value="AAH67125.1"/>
    <property type="status" value="ALT_INIT"/>
    <property type="molecule type" value="mRNA"/>
</dbReference>
<dbReference type="CCDS" id="CCDS32965.1">
    <molecule id="Q6NXE6-2"/>
</dbReference>
<dbReference type="CCDS" id="CCDS56089.1">
    <molecule id="Q6NXE6-1"/>
</dbReference>
<dbReference type="RefSeq" id="NP_001186125.1">
    <molecule id="Q6NXE6-1"/>
    <property type="nucleotide sequence ID" value="NM_001199196.2"/>
</dbReference>
<dbReference type="RefSeq" id="NP_219483.1">
    <molecule id="Q6NXE6-2"/>
    <property type="nucleotide sequence ID" value="NM_033415.4"/>
</dbReference>
<dbReference type="RefSeq" id="XP_005260214.1">
    <molecule id="Q6NXE6-2"/>
    <property type="nucleotide sequence ID" value="XM_005260157.4"/>
</dbReference>
<dbReference type="RefSeq" id="XP_016882974.1">
    <property type="nucleotide sequence ID" value="XM_017027485.1"/>
</dbReference>
<dbReference type="RefSeq" id="XP_047295670.1">
    <molecule id="Q6NXE6-1"/>
    <property type="nucleotide sequence ID" value="XM_047439714.1"/>
</dbReference>
<dbReference type="RefSeq" id="XP_047295672.1">
    <molecule id="Q6NXE6-2"/>
    <property type="nucleotide sequence ID" value="XM_047439716.1"/>
</dbReference>
<dbReference type="RefSeq" id="XP_054178648.1">
    <molecule id="Q6NXE6-1"/>
    <property type="nucleotide sequence ID" value="XM_054322673.1"/>
</dbReference>
<dbReference type="RefSeq" id="XP_054178650.1">
    <molecule id="Q6NXE6-2"/>
    <property type="nucleotide sequence ID" value="XM_054322675.1"/>
</dbReference>
<dbReference type="SMR" id="Q6NXE6"/>
<dbReference type="BioGRID" id="125026">
    <property type="interactions" value="202"/>
</dbReference>
<dbReference type="FunCoup" id="Q6NXE6">
    <property type="interactions" value="1979"/>
</dbReference>
<dbReference type="IntAct" id="Q6NXE6">
    <property type="interactions" value="117"/>
</dbReference>
<dbReference type="MINT" id="Q6NXE6"/>
<dbReference type="STRING" id="9606.ENSP00000444156"/>
<dbReference type="GlyGen" id="Q6NXE6">
    <property type="glycosylation" value="1 site, 1 O-linked glycan (1 site)"/>
</dbReference>
<dbReference type="iPTMnet" id="Q6NXE6"/>
<dbReference type="PhosphoSitePlus" id="Q6NXE6"/>
<dbReference type="BioMuta" id="ARMC6"/>
<dbReference type="DMDM" id="109940304"/>
<dbReference type="jPOST" id="Q6NXE6"/>
<dbReference type="MassIVE" id="Q6NXE6"/>
<dbReference type="PaxDb" id="9606-ENSP00000444156"/>
<dbReference type="PeptideAtlas" id="Q6NXE6"/>
<dbReference type="ProteomicsDB" id="66751">
    <molecule id="Q6NXE6-1"/>
</dbReference>
<dbReference type="ProteomicsDB" id="66752">
    <molecule id="Q6NXE6-2"/>
</dbReference>
<dbReference type="Pumba" id="Q6NXE6"/>
<dbReference type="Antibodypedia" id="28329">
    <property type="antibodies" value="113 antibodies from 25 providers"/>
</dbReference>
<dbReference type="DNASU" id="93436"/>
<dbReference type="Ensembl" id="ENST00000269932.10">
    <molecule id="Q6NXE6-2"/>
    <property type="protein sequence ID" value="ENSP00000269932.6"/>
    <property type="gene ID" value="ENSG00000105676.14"/>
</dbReference>
<dbReference type="Ensembl" id="ENST00000392335.6">
    <molecule id="Q6NXE6-2"/>
    <property type="protein sequence ID" value="ENSP00000376147.2"/>
    <property type="gene ID" value="ENSG00000105676.14"/>
</dbReference>
<dbReference type="Ensembl" id="ENST00000392336.7">
    <molecule id="Q6NXE6-1"/>
    <property type="protein sequence ID" value="ENSP00000376148.3"/>
    <property type="gene ID" value="ENSG00000105676.14"/>
</dbReference>
<dbReference type="Ensembl" id="ENST00000535612.6">
    <molecule id="Q6NXE6-1"/>
    <property type="protein sequence ID" value="ENSP00000444156.1"/>
    <property type="gene ID" value="ENSG00000105676.14"/>
</dbReference>
<dbReference type="GeneID" id="93436"/>
<dbReference type="KEGG" id="hsa:93436"/>
<dbReference type="MANE-Select" id="ENST00000535612.6">
    <property type="protein sequence ID" value="ENSP00000444156.1"/>
    <property type="RefSeq nucleotide sequence ID" value="NM_001199196.2"/>
    <property type="RefSeq protein sequence ID" value="NP_001186125.1"/>
</dbReference>
<dbReference type="UCSC" id="uc002nlc.4">
    <molecule id="Q6NXE6-1"/>
    <property type="organism name" value="human"/>
</dbReference>
<dbReference type="AGR" id="HGNC:25049"/>
<dbReference type="CTD" id="93436"/>
<dbReference type="DisGeNET" id="93436"/>
<dbReference type="GeneCards" id="ARMC6"/>
<dbReference type="HGNC" id="HGNC:25049">
    <property type="gene designation" value="ARMC6"/>
</dbReference>
<dbReference type="HPA" id="ENSG00000105676">
    <property type="expression patterns" value="Tissue enriched (liver)"/>
</dbReference>
<dbReference type="neXtProt" id="NX_Q6NXE6"/>
<dbReference type="OpenTargets" id="ENSG00000105676"/>
<dbReference type="PharmGKB" id="PA134884604"/>
<dbReference type="VEuPathDB" id="HostDB:ENSG00000105676"/>
<dbReference type="eggNOG" id="KOG4199">
    <property type="taxonomic scope" value="Eukaryota"/>
</dbReference>
<dbReference type="GeneTree" id="ENSGT00390000002913"/>
<dbReference type="HOGENOM" id="CLU_039447_1_0_1"/>
<dbReference type="InParanoid" id="Q6NXE6"/>
<dbReference type="OMA" id="THKQPDL"/>
<dbReference type="OrthoDB" id="449062at2759"/>
<dbReference type="PAN-GO" id="Q6NXE6">
    <property type="GO annotations" value="1 GO annotation based on evolutionary models"/>
</dbReference>
<dbReference type="PhylomeDB" id="Q6NXE6"/>
<dbReference type="TreeFam" id="TF324526"/>
<dbReference type="PathwayCommons" id="Q6NXE6"/>
<dbReference type="SignaLink" id="Q6NXE6"/>
<dbReference type="BioGRID-ORCS" id="93436">
    <property type="hits" value="105 hits in 1154 CRISPR screens"/>
</dbReference>
<dbReference type="CD-CODE" id="DEE660B4">
    <property type="entry name" value="Stress granule"/>
</dbReference>
<dbReference type="ChiTaRS" id="ARMC6">
    <property type="organism name" value="human"/>
</dbReference>
<dbReference type="GeneWiki" id="ARMC6"/>
<dbReference type="GenomeRNAi" id="93436"/>
<dbReference type="Pharos" id="Q6NXE6">
    <property type="development level" value="Tdark"/>
</dbReference>
<dbReference type="PRO" id="PR:Q6NXE6"/>
<dbReference type="Proteomes" id="UP000005640">
    <property type="component" value="Chromosome 19"/>
</dbReference>
<dbReference type="RNAct" id="Q6NXE6">
    <property type="molecule type" value="protein"/>
</dbReference>
<dbReference type="Bgee" id="ENSG00000105676">
    <property type="expression patterns" value="Expressed in right lobe of liver and 179 other cell types or tissues"/>
</dbReference>
<dbReference type="ExpressionAtlas" id="Q6NXE6">
    <property type="expression patterns" value="baseline and differential"/>
</dbReference>
<dbReference type="GO" id="GO:0005829">
    <property type="term" value="C:cytosol"/>
    <property type="evidence" value="ECO:0000314"/>
    <property type="project" value="HPA"/>
</dbReference>
<dbReference type="GO" id="GO:0002244">
    <property type="term" value="P:hematopoietic progenitor cell differentiation"/>
    <property type="evidence" value="ECO:0000318"/>
    <property type="project" value="GO_Central"/>
</dbReference>
<dbReference type="FunFam" id="1.25.10.10:FF:000172">
    <property type="entry name" value="Armadillo repeat-containing protein 6"/>
    <property type="match status" value="1"/>
</dbReference>
<dbReference type="FunFam" id="1.25.10.10:FF:000228">
    <property type="entry name" value="armadillo repeat-containing protein 6 isoform X1"/>
    <property type="match status" value="1"/>
</dbReference>
<dbReference type="Gene3D" id="1.25.10.10">
    <property type="entry name" value="Leucine-rich Repeat Variant"/>
    <property type="match status" value="2"/>
</dbReference>
<dbReference type="InterPro" id="IPR011989">
    <property type="entry name" value="ARM-like"/>
</dbReference>
<dbReference type="InterPro" id="IPR016024">
    <property type="entry name" value="ARM-type_fold"/>
</dbReference>
<dbReference type="InterPro" id="IPR000225">
    <property type="entry name" value="Armadillo"/>
</dbReference>
<dbReference type="PANTHER" id="PTHR22895">
    <property type="entry name" value="ARMADILLO REPEAT-CONTAINING PROTEIN 6"/>
    <property type="match status" value="1"/>
</dbReference>
<dbReference type="PANTHER" id="PTHR22895:SF0">
    <property type="entry name" value="ARMADILLO REPEAT-CONTAINING PROTEIN 6"/>
    <property type="match status" value="1"/>
</dbReference>
<dbReference type="Pfam" id="PF00514">
    <property type="entry name" value="Arm"/>
    <property type="match status" value="1"/>
</dbReference>
<dbReference type="SMART" id="SM00185">
    <property type="entry name" value="ARM"/>
    <property type="match status" value="6"/>
</dbReference>
<dbReference type="SUPFAM" id="SSF48371">
    <property type="entry name" value="ARM repeat"/>
    <property type="match status" value="1"/>
</dbReference>
<dbReference type="PROSITE" id="PS50176">
    <property type="entry name" value="ARM_REPEAT"/>
    <property type="match status" value="1"/>
</dbReference>
<feature type="chain" id="PRO_0000242660" description="Armadillo repeat-containing protein 6">
    <location>
        <begin position="1"/>
        <end position="501"/>
    </location>
</feature>
<feature type="repeat" description="ARM 1">
    <location>
        <begin position="220"/>
        <end position="264"/>
    </location>
</feature>
<feature type="repeat" description="ARM 2">
    <location>
        <begin position="274"/>
        <end position="318"/>
    </location>
</feature>
<feature type="repeat" description="ARM 3">
    <location>
        <begin position="319"/>
        <end position="369"/>
    </location>
</feature>
<feature type="repeat" description="ARM 4">
    <location>
        <begin position="370"/>
        <end position="412"/>
    </location>
</feature>
<feature type="modified residue" description="Phosphoserine" evidence="3">
    <location>
        <position position="64"/>
    </location>
</feature>
<feature type="modified residue" description="Pros-methylhistidine" evidence="1">
    <location>
        <position position="263"/>
    </location>
</feature>
<feature type="splice variant" id="VSP_040103" description="In isoform 2." evidence="2">
    <location>
        <begin position="1"/>
        <end position="25"/>
    </location>
</feature>
<feature type="mutagenesis site" description="Strongly reduced histidine methylation by METTL9." evidence="1">
    <original>H</original>
    <variation>R</variation>
    <variation>A</variation>
    <location>
        <position position="261"/>
    </location>
</feature>
<feature type="mutagenesis site" description="Does not affect histidine methylation by METTL9." evidence="1">
    <original>A</original>
    <variation>G</variation>
    <location>
        <position position="262"/>
    </location>
</feature>
<feature type="mutagenesis site" description="Abolished histidine methylation by METTL9." evidence="1">
    <original>H</original>
    <variation>R</variation>
    <variation>A</variation>
    <location>
        <position position="263"/>
    </location>
</feature>
<feature type="mutagenesis site" description="Does not affect histidine methylation by METTL9." evidence="1">
    <original>N</original>
    <variation>D</variation>
    <location>
        <position position="264"/>
    </location>
</feature>
<feature type="mutagenesis site" description="Does not affect histidine methylation by METTL9." evidence="1">
    <original>H</original>
    <variation>A</variation>
    <location>
        <position position="265"/>
    </location>
</feature>
<feature type="mutagenesis site" description="Does not affect histidine methylation by METTL9." evidence="1">
    <original>A</original>
    <variation>G</variation>
    <location>
        <position position="266"/>
    </location>
</feature>
<feature type="mutagenesis site" description="Does not affect histidine methylation by METTL9." evidence="1">
    <original>K</original>
    <variation>R</variation>
    <location>
        <position position="267"/>
    </location>
</feature>
<protein>
    <recommendedName>
        <fullName>Armadillo repeat-containing protein 6</fullName>
    </recommendedName>
</protein>
<organism>
    <name type="scientific">Homo sapiens</name>
    <name type="common">Human</name>
    <dbReference type="NCBI Taxonomy" id="9606"/>
    <lineage>
        <taxon>Eukaryota</taxon>
        <taxon>Metazoa</taxon>
        <taxon>Chordata</taxon>
        <taxon>Craniata</taxon>
        <taxon>Vertebrata</taxon>
        <taxon>Euteleostomi</taxon>
        <taxon>Mammalia</taxon>
        <taxon>Eutheria</taxon>
        <taxon>Euarchontoglires</taxon>
        <taxon>Primates</taxon>
        <taxon>Haplorrhini</taxon>
        <taxon>Catarrhini</taxon>
        <taxon>Hominidae</taxon>
        <taxon>Homo</taxon>
    </lineage>
</organism>
<proteinExistence type="evidence at protein level"/>
<name>ARMC6_HUMAN</name>
<accession>Q6NXE6</accession>
<accession>B4DI98</accession>
<accession>O94999</accession>
<accession>Q9BTH5</accession>
<comment type="alternative products">
    <event type="alternative splicing"/>
    <isoform>
        <id>Q6NXE6-1</id>
        <name>1</name>
        <sequence type="displayed"/>
    </isoform>
    <isoform>
        <id>Q6NXE6-2</id>
        <name>2</name>
        <sequence type="described" ref="VSP_040103"/>
    </isoform>
</comment>
<comment type="PTM">
    <text evidence="1">Methylated at His-263 by METTL9.</text>
</comment>
<comment type="similarity">
    <text evidence="2">Belongs to the ARMC6 family.</text>
</comment>
<comment type="caution">
    <text evidence="2">It is uncertain whether Met-1 or Met-26 is the initiator.</text>
</comment>
<comment type="sequence caution" evidence="2">
    <conflict type="erroneous gene model prediction">
        <sequence resource="EMBL-CDS" id="AAD03162"/>
    </conflict>
</comment>
<comment type="sequence caution" evidence="2">
    <conflict type="erroneous initiation">
        <sequence resource="EMBL-CDS" id="AAH67125"/>
    </conflict>
    <text>Truncated N-terminus.</text>
</comment>
<reference key="1">
    <citation type="journal article" date="2004" name="Nat. Genet.">
        <title>Complete sequencing and characterization of 21,243 full-length human cDNAs.</title>
        <authorList>
            <person name="Ota T."/>
            <person name="Suzuki Y."/>
            <person name="Nishikawa T."/>
            <person name="Otsuki T."/>
            <person name="Sugiyama T."/>
            <person name="Irie R."/>
            <person name="Wakamatsu A."/>
            <person name="Hayashi K."/>
            <person name="Sato H."/>
            <person name="Nagai K."/>
            <person name="Kimura K."/>
            <person name="Makita H."/>
            <person name="Sekine M."/>
            <person name="Obayashi M."/>
            <person name="Nishi T."/>
            <person name="Shibahara T."/>
            <person name="Tanaka T."/>
            <person name="Ishii S."/>
            <person name="Yamamoto J."/>
            <person name="Saito K."/>
            <person name="Kawai Y."/>
            <person name="Isono Y."/>
            <person name="Nakamura Y."/>
            <person name="Nagahari K."/>
            <person name="Murakami K."/>
            <person name="Yasuda T."/>
            <person name="Iwayanagi T."/>
            <person name="Wagatsuma M."/>
            <person name="Shiratori A."/>
            <person name="Sudo H."/>
            <person name="Hosoiri T."/>
            <person name="Kaku Y."/>
            <person name="Kodaira H."/>
            <person name="Kondo H."/>
            <person name="Sugawara M."/>
            <person name="Takahashi M."/>
            <person name="Kanda K."/>
            <person name="Yokoi T."/>
            <person name="Furuya T."/>
            <person name="Kikkawa E."/>
            <person name="Omura Y."/>
            <person name="Abe K."/>
            <person name="Kamihara K."/>
            <person name="Katsuta N."/>
            <person name="Sato K."/>
            <person name="Tanikawa M."/>
            <person name="Yamazaki M."/>
            <person name="Ninomiya K."/>
            <person name="Ishibashi T."/>
            <person name="Yamashita H."/>
            <person name="Murakawa K."/>
            <person name="Fujimori K."/>
            <person name="Tanai H."/>
            <person name="Kimata M."/>
            <person name="Watanabe M."/>
            <person name="Hiraoka S."/>
            <person name="Chiba Y."/>
            <person name="Ishida S."/>
            <person name="Ono Y."/>
            <person name="Takiguchi S."/>
            <person name="Watanabe S."/>
            <person name="Yosida M."/>
            <person name="Hotuta T."/>
            <person name="Kusano J."/>
            <person name="Kanehori K."/>
            <person name="Takahashi-Fujii A."/>
            <person name="Hara H."/>
            <person name="Tanase T.-O."/>
            <person name="Nomura Y."/>
            <person name="Togiya S."/>
            <person name="Komai F."/>
            <person name="Hara R."/>
            <person name="Takeuchi K."/>
            <person name="Arita M."/>
            <person name="Imose N."/>
            <person name="Musashino K."/>
            <person name="Yuuki H."/>
            <person name="Oshima A."/>
            <person name="Sasaki N."/>
            <person name="Aotsuka S."/>
            <person name="Yoshikawa Y."/>
            <person name="Matsunawa H."/>
            <person name="Ichihara T."/>
            <person name="Shiohata N."/>
            <person name="Sano S."/>
            <person name="Moriya S."/>
            <person name="Momiyama H."/>
            <person name="Satoh N."/>
            <person name="Takami S."/>
            <person name="Terashima Y."/>
            <person name="Suzuki O."/>
            <person name="Nakagawa S."/>
            <person name="Senoh A."/>
            <person name="Mizoguchi H."/>
            <person name="Goto Y."/>
            <person name="Shimizu F."/>
            <person name="Wakebe H."/>
            <person name="Hishigaki H."/>
            <person name="Watanabe T."/>
            <person name="Sugiyama A."/>
            <person name="Takemoto M."/>
            <person name="Kawakami B."/>
            <person name="Yamazaki M."/>
            <person name="Watanabe K."/>
            <person name="Kumagai A."/>
            <person name="Itakura S."/>
            <person name="Fukuzumi Y."/>
            <person name="Fujimori Y."/>
            <person name="Komiyama M."/>
            <person name="Tashiro H."/>
            <person name="Tanigami A."/>
            <person name="Fujiwara T."/>
            <person name="Ono T."/>
            <person name="Yamada K."/>
            <person name="Fujii Y."/>
            <person name="Ozaki K."/>
            <person name="Hirao M."/>
            <person name="Ohmori Y."/>
            <person name="Kawabata A."/>
            <person name="Hikiji T."/>
            <person name="Kobatake N."/>
            <person name="Inagaki H."/>
            <person name="Ikema Y."/>
            <person name="Okamoto S."/>
            <person name="Okitani R."/>
            <person name="Kawakami T."/>
            <person name="Noguchi S."/>
            <person name="Itoh T."/>
            <person name="Shigeta K."/>
            <person name="Senba T."/>
            <person name="Matsumura K."/>
            <person name="Nakajima Y."/>
            <person name="Mizuno T."/>
            <person name="Morinaga M."/>
            <person name="Sasaki M."/>
            <person name="Togashi T."/>
            <person name="Oyama M."/>
            <person name="Hata H."/>
            <person name="Watanabe M."/>
            <person name="Komatsu T."/>
            <person name="Mizushima-Sugano J."/>
            <person name="Satoh T."/>
            <person name="Shirai Y."/>
            <person name="Takahashi Y."/>
            <person name="Nakagawa K."/>
            <person name="Okumura K."/>
            <person name="Nagase T."/>
            <person name="Nomura N."/>
            <person name="Kikuchi H."/>
            <person name="Masuho Y."/>
            <person name="Yamashita R."/>
            <person name="Nakai K."/>
            <person name="Yada T."/>
            <person name="Nakamura Y."/>
            <person name="Ohara O."/>
            <person name="Isogai T."/>
            <person name="Sugano S."/>
        </authorList>
    </citation>
    <scope>NUCLEOTIDE SEQUENCE [LARGE SCALE MRNA] (ISOFORM 1)</scope>
    <source>
        <tissue>Hippocampus</tissue>
    </source>
</reference>
<reference key="2">
    <citation type="journal article" date="2004" name="Nature">
        <title>The DNA sequence and biology of human chromosome 19.</title>
        <authorList>
            <person name="Grimwood J."/>
            <person name="Gordon L.A."/>
            <person name="Olsen A.S."/>
            <person name="Terry A."/>
            <person name="Schmutz J."/>
            <person name="Lamerdin J.E."/>
            <person name="Hellsten U."/>
            <person name="Goodstein D."/>
            <person name="Couronne O."/>
            <person name="Tran-Gyamfi M."/>
            <person name="Aerts A."/>
            <person name="Altherr M."/>
            <person name="Ashworth L."/>
            <person name="Bajorek E."/>
            <person name="Black S."/>
            <person name="Branscomb E."/>
            <person name="Caenepeel S."/>
            <person name="Carrano A.V."/>
            <person name="Caoile C."/>
            <person name="Chan Y.M."/>
            <person name="Christensen M."/>
            <person name="Cleland C.A."/>
            <person name="Copeland A."/>
            <person name="Dalin E."/>
            <person name="Dehal P."/>
            <person name="Denys M."/>
            <person name="Detter J.C."/>
            <person name="Escobar J."/>
            <person name="Flowers D."/>
            <person name="Fotopulos D."/>
            <person name="Garcia C."/>
            <person name="Georgescu A.M."/>
            <person name="Glavina T."/>
            <person name="Gomez M."/>
            <person name="Gonzales E."/>
            <person name="Groza M."/>
            <person name="Hammon N."/>
            <person name="Hawkins T."/>
            <person name="Haydu L."/>
            <person name="Ho I."/>
            <person name="Huang W."/>
            <person name="Israni S."/>
            <person name="Jett J."/>
            <person name="Kadner K."/>
            <person name="Kimball H."/>
            <person name="Kobayashi A."/>
            <person name="Larionov V."/>
            <person name="Leem S.-H."/>
            <person name="Lopez F."/>
            <person name="Lou Y."/>
            <person name="Lowry S."/>
            <person name="Malfatti S."/>
            <person name="Martinez D."/>
            <person name="McCready P.M."/>
            <person name="Medina C."/>
            <person name="Morgan J."/>
            <person name="Nelson K."/>
            <person name="Nolan M."/>
            <person name="Ovcharenko I."/>
            <person name="Pitluck S."/>
            <person name="Pollard M."/>
            <person name="Popkie A.P."/>
            <person name="Predki P."/>
            <person name="Quan G."/>
            <person name="Ramirez L."/>
            <person name="Rash S."/>
            <person name="Retterer J."/>
            <person name="Rodriguez A."/>
            <person name="Rogers S."/>
            <person name="Salamov A."/>
            <person name="Salazar A."/>
            <person name="She X."/>
            <person name="Smith D."/>
            <person name="Slezak T."/>
            <person name="Solovyev V."/>
            <person name="Thayer N."/>
            <person name="Tice H."/>
            <person name="Tsai M."/>
            <person name="Ustaszewska A."/>
            <person name="Vo N."/>
            <person name="Wagner M."/>
            <person name="Wheeler J."/>
            <person name="Wu K."/>
            <person name="Xie G."/>
            <person name="Yang J."/>
            <person name="Dubchak I."/>
            <person name="Furey T.S."/>
            <person name="DeJong P."/>
            <person name="Dickson M."/>
            <person name="Gordon D."/>
            <person name="Eichler E.E."/>
            <person name="Pennacchio L.A."/>
            <person name="Richardson P."/>
            <person name="Stubbs L."/>
            <person name="Rokhsar D.S."/>
            <person name="Myers R.M."/>
            <person name="Rubin E.M."/>
            <person name="Lucas S.M."/>
        </authorList>
    </citation>
    <scope>NUCLEOTIDE SEQUENCE [LARGE SCALE GENOMIC DNA]</scope>
</reference>
<reference key="3">
    <citation type="journal article" date="2004" name="Genome Res.">
        <title>The status, quality, and expansion of the NIH full-length cDNA project: the Mammalian Gene Collection (MGC).</title>
        <authorList>
            <consortium name="The MGC Project Team"/>
        </authorList>
    </citation>
    <scope>NUCLEOTIDE SEQUENCE [LARGE SCALE MRNA] (ISOFORM 1)</scope>
    <source>
        <tissue>Cervix</tissue>
        <tissue>Skin</tissue>
    </source>
</reference>
<reference key="4">
    <citation type="journal article" date="2007" name="Science">
        <title>ATM and ATR substrate analysis reveals extensive protein networks responsive to DNA damage.</title>
        <authorList>
            <person name="Matsuoka S."/>
            <person name="Ballif B.A."/>
            <person name="Smogorzewska A."/>
            <person name="McDonald E.R. III"/>
            <person name="Hurov K.E."/>
            <person name="Luo J."/>
            <person name="Bakalarski C.E."/>
            <person name="Zhao Z."/>
            <person name="Solimini N."/>
            <person name="Lerenthal Y."/>
            <person name="Shiloh Y."/>
            <person name="Gygi S.P."/>
            <person name="Elledge S.J."/>
        </authorList>
    </citation>
    <scope>PHOSPHORYLATION [LARGE SCALE ANALYSIS] AT SER-64</scope>
    <scope>IDENTIFICATION BY MASS SPECTROMETRY [LARGE SCALE ANALYSIS]</scope>
    <source>
        <tissue>Embryonic kidney</tissue>
    </source>
</reference>
<reference key="5">
    <citation type="journal article" date="2011" name="BMC Syst. Biol.">
        <title>Initial characterization of the human central proteome.</title>
        <authorList>
            <person name="Burkard T.R."/>
            <person name="Planyavsky M."/>
            <person name="Kaupe I."/>
            <person name="Breitwieser F.P."/>
            <person name="Buerckstuemmer T."/>
            <person name="Bennett K.L."/>
            <person name="Superti-Furga G."/>
            <person name="Colinge J."/>
        </authorList>
    </citation>
    <scope>IDENTIFICATION BY MASS SPECTROMETRY [LARGE SCALE ANALYSIS]</scope>
</reference>
<reference key="6">
    <citation type="journal article" date="2014" name="J. Proteomics">
        <title>An enzyme assisted RP-RPLC approach for in-depth analysis of human liver phosphoproteome.</title>
        <authorList>
            <person name="Bian Y."/>
            <person name="Song C."/>
            <person name="Cheng K."/>
            <person name="Dong M."/>
            <person name="Wang F."/>
            <person name="Huang J."/>
            <person name="Sun D."/>
            <person name="Wang L."/>
            <person name="Ye M."/>
            <person name="Zou H."/>
        </authorList>
    </citation>
    <scope>IDENTIFICATION BY MASS SPECTROMETRY [LARGE SCALE ANALYSIS]</scope>
    <source>
        <tissue>Liver</tissue>
    </source>
</reference>
<reference key="7">
    <citation type="journal article" date="2021" name="Nat. Commun.">
        <title>The methyltransferase METTL9 mediates pervasive 1-methylhistidine modification in mammalian proteomes.</title>
        <authorList>
            <person name="Davydova E."/>
            <person name="Shimazu T."/>
            <person name="Schuhmacher M.K."/>
            <person name="Jakobsson M.E."/>
            <person name="Willemen H.L.D.M."/>
            <person name="Liu T."/>
            <person name="Moen A."/>
            <person name="Ho A.Y.Y."/>
            <person name="Malecki J."/>
            <person name="Schroer L."/>
            <person name="Pinto R."/>
            <person name="Suzuki T."/>
            <person name="Groensberg I.A."/>
            <person name="Sohtome Y."/>
            <person name="Akakabe M."/>
            <person name="Weirich S."/>
            <person name="Kikuchi M."/>
            <person name="Olsen J.V."/>
            <person name="Dohmae N."/>
            <person name="Umehara T."/>
            <person name="Sodeoka M."/>
            <person name="Siino V."/>
            <person name="McDonough M.A."/>
            <person name="Eijkelkamp N."/>
            <person name="Schofield C.J."/>
            <person name="Jeltsch A."/>
            <person name="Shinkai Y."/>
            <person name="Falnes P.O."/>
        </authorList>
    </citation>
    <scope>METHYLATION AT HIS-263</scope>
    <scope>MUTAGENESIS OF HIS-261; ALA-262; HIS-263; ASN-264; HIS-265; ALA-266 AND LYS-267</scope>
</reference>
<gene>
    <name type="primary">ARMC6</name>
</gene>
<evidence type="ECO:0000269" key="1">
    <source>
    </source>
</evidence>
<evidence type="ECO:0000305" key="2"/>
<evidence type="ECO:0007744" key="3">
    <source>
    </source>
</evidence>
<keyword id="KW-0025">Alternative splicing</keyword>
<keyword id="KW-0488">Methylation</keyword>
<keyword id="KW-0597">Phosphoprotein</keyword>
<keyword id="KW-1267">Proteomics identification</keyword>
<keyword id="KW-1185">Reference proteome</keyword>
<keyword id="KW-0677">Repeat</keyword>
<sequence>MSERCCSRYSSGASIGCTPTSTQAKMVSKRIAQETFDAAVRENIEEFAMGPEEAVKEAVEQFESQGVDLSNIVKTAPKVSADGSQEPTHDILQMLSDLQESVASSRPQEVSAYLTRFCDQCKQDKACRFLAAQKGAYPIIFTAWKLATAGDQGLLLQSLNALSVLTDGQPDLLDAQGLQLLVATLTQNADEADLTCSGIRCVRHACLKHEQNRQDLVKAGVLPLLTGAITHHGHHTDVVREACWALRVMTFDDDIRVPFGHAHNHAKMIVQENKGLKVLIEATKAFLDNPGILSELCGTLSRLAIRNEFCQEVVDLGGLSILVSLLADCNDHQMRDQSGVQELVKQVLSTLRAIAGNDDVKDAIVRAGGTESIVAAMTQHLTSPQVCEQSCAALCFLALRKPDNSRIIVEGGGAVAALQAMKAHPQKAGVQKQACMLIRNLVAHGQAFSKPILDLGAEALIMQARSAHRDCEDVAKAALRDLGCHVELRELWTGQRGNLAP</sequence>